<dbReference type="EMBL" id="Z71463">
    <property type="protein sequence ID" value="CAA96081.1"/>
    <property type="molecule type" value="Genomic_DNA"/>
</dbReference>
<dbReference type="EMBL" id="BK006947">
    <property type="protein sequence ID" value="DAA10366.1"/>
    <property type="molecule type" value="Genomic_DNA"/>
</dbReference>
<dbReference type="PIR" id="S63142">
    <property type="entry name" value="S63142"/>
</dbReference>
<dbReference type="RefSeq" id="NP_014212.1">
    <property type="nucleotide sequence ID" value="NM_001183025.1"/>
</dbReference>
<dbReference type="SMR" id="P53873"/>
<dbReference type="BioGRID" id="35646">
    <property type="interactions" value="22"/>
</dbReference>
<dbReference type="DIP" id="DIP-971N"/>
<dbReference type="FunCoup" id="P53873">
    <property type="interactions" value="44"/>
</dbReference>
<dbReference type="IntAct" id="P53873">
    <property type="interactions" value="3"/>
</dbReference>
<dbReference type="MINT" id="P53873"/>
<dbReference type="STRING" id="4932.YNL187W"/>
<dbReference type="iPTMnet" id="P53873"/>
<dbReference type="PaxDb" id="4932-YNL187W"/>
<dbReference type="PeptideAtlas" id="P53873"/>
<dbReference type="EnsemblFungi" id="YNL187W_mRNA">
    <property type="protein sequence ID" value="YNL187W"/>
    <property type="gene ID" value="YNL187W"/>
</dbReference>
<dbReference type="GeneID" id="855534"/>
<dbReference type="KEGG" id="sce:YNL187W"/>
<dbReference type="AGR" id="SGD:S000005131"/>
<dbReference type="SGD" id="S000005131">
    <property type="gene designation" value="SWT21"/>
</dbReference>
<dbReference type="VEuPathDB" id="FungiDB:YNL187W"/>
<dbReference type="eggNOG" id="ENOG502QVPI">
    <property type="taxonomic scope" value="Eukaryota"/>
</dbReference>
<dbReference type="GeneTree" id="ENSGT00390000010169"/>
<dbReference type="HOGENOM" id="CLU_662333_0_0_1"/>
<dbReference type="InParanoid" id="P53873"/>
<dbReference type="OMA" id="VICQDIF"/>
<dbReference type="OrthoDB" id="239865at2759"/>
<dbReference type="BioCyc" id="YEAST:G3O-33198-MONOMER"/>
<dbReference type="BioGRID-ORCS" id="855534">
    <property type="hits" value="0 hits in 10 CRISPR screens"/>
</dbReference>
<dbReference type="PRO" id="PR:P53873"/>
<dbReference type="Proteomes" id="UP000002311">
    <property type="component" value="Chromosome XIV"/>
</dbReference>
<dbReference type="RNAct" id="P53873">
    <property type="molecule type" value="protein"/>
</dbReference>
<dbReference type="GO" id="GO:0005634">
    <property type="term" value="C:nucleus"/>
    <property type="evidence" value="ECO:0000314"/>
    <property type="project" value="SGD"/>
</dbReference>
<dbReference type="GO" id="GO:0000398">
    <property type="term" value="P:mRNA splicing, via spliceosome"/>
    <property type="evidence" value="ECO:0000315"/>
    <property type="project" value="SGD"/>
</dbReference>
<dbReference type="Gene3D" id="2.130.10.10">
    <property type="entry name" value="YVTN repeat-like/Quinoprotein amine dehydrogenase"/>
    <property type="match status" value="1"/>
</dbReference>
<dbReference type="InterPro" id="IPR051150">
    <property type="entry name" value="SWT21/TCAB1_mRNA_Telomere"/>
</dbReference>
<dbReference type="InterPro" id="IPR015943">
    <property type="entry name" value="WD40/YVTN_repeat-like_dom_sf"/>
</dbReference>
<dbReference type="InterPro" id="IPR036322">
    <property type="entry name" value="WD40_repeat_dom_sf"/>
</dbReference>
<dbReference type="PANTHER" id="PTHR13211">
    <property type="entry name" value="TELOMERASE CAJAL BODY PROTEIN 1"/>
    <property type="match status" value="1"/>
</dbReference>
<dbReference type="PANTHER" id="PTHR13211:SF0">
    <property type="entry name" value="TELOMERASE CAJAL BODY PROTEIN 1"/>
    <property type="match status" value="1"/>
</dbReference>
<dbReference type="SUPFAM" id="SSF50978">
    <property type="entry name" value="WD40 repeat-like"/>
    <property type="match status" value="1"/>
</dbReference>
<proteinExistence type="inferred from homology"/>
<reference key="1">
    <citation type="journal article" date="1997" name="Nature">
        <title>The nucleotide sequence of Saccharomyces cerevisiae chromosome XIV and its evolutionary implications.</title>
        <authorList>
            <person name="Philippsen P."/>
            <person name="Kleine K."/>
            <person name="Poehlmann R."/>
            <person name="Duesterhoeft A."/>
            <person name="Hamberg K."/>
            <person name="Hegemann J.H."/>
            <person name="Obermaier B."/>
            <person name="Urrestarazu L.A."/>
            <person name="Aert R."/>
            <person name="Albermann K."/>
            <person name="Altmann R."/>
            <person name="Andre B."/>
            <person name="Baladron V."/>
            <person name="Ballesta J.P.G."/>
            <person name="Becam A.-M."/>
            <person name="Beinhauer J.D."/>
            <person name="Boskovic J."/>
            <person name="Buitrago M.J."/>
            <person name="Bussereau F."/>
            <person name="Coster F."/>
            <person name="Crouzet M."/>
            <person name="D'Angelo M."/>
            <person name="Dal Pero F."/>
            <person name="De Antoni A."/>
            <person name="del Rey F."/>
            <person name="Doignon F."/>
            <person name="Domdey H."/>
            <person name="Dubois E."/>
            <person name="Fiedler T.A."/>
            <person name="Fleig U."/>
            <person name="Floeth M."/>
            <person name="Fritz C."/>
            <person name="Gaillardin C."/>
            <person name="Garcia-Cantalejo J.M."/>
            <person name="Glansdorff N."/>
            <person name="Goffeau A."/>
            <person name="Gueldener U."/>
            <person name="Herbert C.J."/>
            <person name="Heumann K."/>
            <person name="Heuss-Neitzel D."/>
            <person name="Hilbert H."/>
            <person name="Hinni K."/>
            <person name="Iraqui Houssaini I."/>
            <person name="Jacquet M."/>
            <person name="Jimenez A."/>
            <person name="Jonniaux J.-L."/>
            <person name="Karpfinger-Hartl L."/>
            <person name="Lanfranchi G."/>
            <person name="Lepingle A."/>
            <person name="Levesque H."/>
            <person name="Lyck R."/>
            <person name="Maftahi M."/>
            <person name="Mallet L."/>
            <person name="Maurer C.T.C."/>
            <person name="Messenguy F."/>
            <person name="Mewes H.-W."/>
            <person name="Moestl D."/>
            <person name="Nasr F."/>
            <person name="Nicaud J.-M."/>
            <person name="Niedenthal R.K."/>
            <person name="Pandolfo D."/>
            <person name="Pierard A."/>
            <person name="Piravandi E."/>
            <person name="Planta R.J."/>
            <person name="Pohl T.M."/>
            <person name="Purnelle B."/>
            <person name="Rebischung C."/>
            <person name="Remacha M.A."/>
            <person name="Revuelta J.L."/>
            <person name="Rinke M."/>
            <person name="Saiz J.E."/>
            <person name="Sartorello F."/>
            <person name="Scherens B."/>
            <person name="Sen-Gupta M."/>
            <person name="Soler-Mira A."/>
            <person name="Urbanus J.H.M."/>
            <person name="Valle G."/>
            <person name="Van Dyck L."/>
            <person name="Verhasselt P."/>
            <person name="Vierendeels F."/>
            <person name="Vissers S."/>
            <person name="Voet M."/>
            <person name="Volckaert G."/>
            <person name="Wach A."/>
            <person name="Wambutt R."/>
            <person name="Wedler H."/>
            <person name="Zollner A."/>
            <person name="Hani J."/>
        </authorList>
    </citation>
    <scope>NUCLEOTIDE SEQUENCE [LARGE SCALE GENOMIC DNA]</scope>
    <source>
        <strain>ATCC 204508 / S288c</strain>
    </source>
</reference>
<reference key="2">
    <citation type="journal article" date="2014" name="G3 (Bethesda)">
        <title>The reference genome sequence of Saccharomyces cerevisiae: Then and now.</title>
        <authorList>
            <person name="Engel S.R."/>
            <person name="Dietrich F.S."/>
            <person name="Fisk D.G."/>
            <person name="Binkley G."/>
            <person name="Balakrishnan R."/>
            <person name="Costanzo M.C."/>
            <person name="Dwight S.S."/>
            <person name="Hitz B.C."/>
            <person name="Karra K."/>
            <person name="Nash R.S."/>
            <person name="Weng S."/>
            <person name="Wong E.D."/>
            <person name="Lloyd P."/>
            <person name="Skrzypek M.S."/>
            <person name="Miyasato S.R."/>
            <person name="Simison M."/>
            <person name="Cherry J.M."/>
        </authorList>
    </citation>
    <scope>GENOME REANNOTATION</scope>
    <source>
        <strain>ATCC 204508 / S288c</strain>
    </source>
</reference>
<reference key="3">
    <citation type="journal article" date="2004" name="Genetics">
        <title>The yeast splicing factor Prp40p contains functional leucine-rich nuclear export signals that are essential for splicing.</title>
        <authorList>
            <person name="Murphy M.W."/>
            <person name="Olson B.L."/>
            <person name="Siliciano P.G."/>
        </authorList>
    </citation>
    <scope>SUBCELLULAR LOCATION</scope>
</reference>
<reference key="4">
    <citation type="journal article" date="2009" name="Mol. Cell. Biol.">
        <title>A targeted bypass screen identifies Ynl187p, Prp42p, Snu71p, and Cbp80p for stable U1 snRNP/Pre-mRNA interaction.</title>
        <authorList>
            <person name="Hage R."/>
            <person name="Tung L."/>
            <person name="Du H."/>
            <person name="Stands L."/>
            <person name="Rosbash M."/>
            <person name="Chang T.H."/>
        </authorList>
    </citation>
    <scope>FUNCTION</scope>
    <scope>SUBCELLULAR LOCATION</scope>
    <scope>ASSOCIATION WITH SNRNPS</scope>
</reference>
<feature type="chain" id="PRO_0000203403" description="Protein SWT21">
    <location>
        <begin position="1"/>
        <end position="357"/>
    </location>
</feature>
<comment type="function">
    <text evidence="2">Involved in mRNA splicing. Helps to stabilize the U1 snRNP-5' splice site interaction.</text>
</comment>
<comment type="subunit">
    <text>Associates with snRNPs.</text>
</comment>
<comment type="subcellular location">
    <subcellularLocation>
        <location evidence="1 2">Nucleus</location>
    </subcellularLocation>
</comment>
<comment type="similarity">
    <text evidence="3">Belongs to the SWT21 family.</text>
</comment>
<protein>
    <recommendedName>
        <fullName>Protein SWT21</fullName>
    </recommendedName>
    <alternativeName>
        <fullName>Synthetic With TGS1 protein 21</fullName>
    </alternativeName>
</protein>
<sequence>MEKKVICQDIFWSCDGTSFVSVHNDFGIRQYLVPEESNTDKLNRNLLLPFTRFFRNQSIVSCAIDPFYTLYNENSDRLAGDRIVVGGKNFPLQLYSLMDGQCILSYDTMNKINGEYETVYSVKIDVESRVYTGSCRNKVAIYDKSRRDAVWMNQSTKKASKGRQSIISCFEEQPMGGQALSRGSLLCGSYANEMFQVDCRHQRLERLNYTRTVAGGIVQILTSDNGRYVYVVRRNSDAISIYDRRNLQHELNVLRLPFRIHHNSAKLKAYIDTAYGLSMGTPQGTILNWGRDLVEFGGVPSHNSVEDPLITSIPPESEWRTNLDSTIPATVVKNCPGDPELFALSHGGTISLCRFGG</sequence>
<gene>
    <name type="primary">SWT21</name>
    <name type="ordered locus">YNL187W</name>
    <name type="ORF">N1615</name>
</gene>
<accession>P53873</accession>
<accession>D6W100</accession>
<keyword id="KW-0507">mRNA processing</keyword>
<keyword id="KW-0508">mRNA splicing</keyword>
<keyword id="KW-0539">Nucleus</keyword>
<keyword id="KW-1185">Reference proteome</keyword>
<name>SWT21_YEAST</name>
<organism>
    <name type="scientific">Saccharomyces cerevisiae (strain ATCC 204508 / S288c)</name>
    <name type="common">Baker's yeast</name>
    <dbReference type="NCBI Taxonomy" id="559292"/>
    <lineage>
        <taxon>Eukaryota</taxon>
        <taxon>Fungi</taxon>
        <taxon>Dikarya</taxon>
        <taxon>Ascomycota</taxon>
        <taxon>Saccharomycotina</taxon>
        <taxon>Saccharomycetes</taxon>
        <taxon>Saccharomycetales</taxon>
        <taxon>Saccharomycetaceae</taxon>
        <taxon>Saccharomyces</taxon>
    </lineage>
</organism>
<evidence type="ECO:0000269" key="1">
    <source>
    </source>
</evidence>
<evidence type="ECO:0000269" key="2">
    <source>
    </source>
</evidence>
<evidence type="ECO:0000305" key="3"/>